<organism>
    <name type="scientific">Streptomyces coelicolor (strain ATCC BAA-471 / A3(2) / M145)</name>
    <dbReference type="NCBI Taxonomy" id="100226"/>
    <lineage>
        <taxon>Bacteria</taxon>
        <taxon>Bacillati</taxon>
        <taxon>Actinomycetota</taxon>
        <taxon>Actinomycetes</taxon>
        <taxon>Kitasatosporales</taxon>
        <taxon>Streptomycetaceae</taxon>
        <taxon>Streptomyces</taxon>
        <taxon>Streptomyces albidoflavus group</taxon>
    </lineage>
</organism>
<keyword id="KW-0004">4Fe-4S</keyword>
<keyword id="KW-1003">Cell membrane</keyword>
<keyword id="KW-0408">Iron</keyword>
<keyword id="KW-0411">Iron-sulfur</keyword>
<keyword id="KW-0472">Membrane</keyword>
<keyword id="KW-0479">Metal-binding</keyword>
<keyword id="KW-0520">NAD</keyword>
<keyword id="KW-0874">Quinone</keyword>
<keyword id="KW-1185">Reference proteome</keyword>
<keyword id="KW-1278">Translocase</keyword>
<keyword id="KW-0813">Transport</keyword>
<feature type="chain" id="PRO_0000376387" description="NADH-quinone oxidoreductase subunit B 1">
    <location>
        <begin position="1"/>
        <end position="184"/>
    </location>
</feature>
<feature type="binding site" evidence="1">
    <location>
        <position position="37"/>
    </location>
    <ligand>
        <name>[4Fe-4S] cluster</name>
        <dbReference type="ChEBI" id="CHEBI:49883"/>
    </ligand>
</feature>
<feature type="binding site" evidence="1">
    <location>
        <position position="38"/>
    </location>
    <ligand>
        <name>[4Fe-4S] cluster</name>
        <dbReference type="ChEBI" id="CHEBI:49883"/>
    </ligand>
</feature>
<feature type="binding site" evidence="1">
    <location>
        <position position="103"/>
    </location>
    <ligand>
        <name>[4Fe-4S] cluster</name>
        <dbReference type="ChEBI" id="CHEBI:49883"/>
    </ligand>
</feature>
<feature type="binding site" evidence="1">
    <location>
        <position position="132"/>
    </location>
    <ligand>
        <name>[4Fe-4S] cluster</name>
        <dbReference type="ChEBI" id="CHEBI:49883"/>
    </ligand>
</feature>
<accession>Q9XAQ5</accession>
<proteinExistence type="inferred from homology"/>
<dbReference type="EC" id="7.1.1.-" evidence="1"/>
<dbReference type="EMBL" id="AL939120">
    <property type="protein sequence ID" value="CAB44530.1"/>
    <property type="molecule type" value="Genomic_DNA"/>
</dbReference>
<dbReference type="PIR" id="T34623">
    <property type="entry name" value="T34623"/>
</dbReference>
<dbReference type="RefSeq" id="NP_628725.1">
    <property type="nucleotide sequence ID" value="NC_003888.3"/>
</dbReference>
<dbReference type="RefSeq" id="WP_006133126.1">
    <property type="nucleotide sequence ID" value="NZ_VNID01000017.1"/>
</dbReference>
<dbReference type="SMR" id="Q9XAQ5"/>
<dbReference type="FunCoup" id="Q9XAQ5">
    <property type="interactions" value="389"/>
</dbReference>
<dbReference type="STRING" id="100226.gene:17762208"/>
<dbReference type="PaxDb" id="100226-SCO4563"/>
<dbReference type="KEGG" id="sco:SCO4563"/>
<dbReference type="PATRIC" id="fig|100226.15.peg.4635"/>
<dbReference type="eggNOG" id="COG0377">
    <property type="taxonomic scope" value="Bacteria"/>
</dbReference>
<dbReference type="HOGENOM" id="CLU_055737_7_3_11"/>
<dbReference type="InParanoid" id="Q9XAQ5"/>
<dbReference type="OrthoDB" id="9786737at2"/>
<dbReference type="PhylomeDB" id="Q9XAQ5"/>
<dbReference type="PRO" id="PR:Q9XAQ5"/>
<dbReference type="Proteomes" id="UP000001973">
    <property type="component" value="Chromosome"/>
</dbReference>
<dbReference type="GO" id="GO:0005886">
    <property type="term" value="C:plasma membrane"/>
    <property type="evidence" value="ECO:0007669"/>
    <property type="project" value="UniProtKB-SubCell"/>
</dbReference>
<dbReference type="GO" id="GO:0045271">
    <property type="term" value="C:respiratory chain complex I"/>
    <property type="evidence" value="ECO:0000318"/>
    <property type="project" value="GO_Central"/>
</dbReference>
<dbReference type="GO" id="GO:0051539">
    <property type="term" value="F:4 iron, 4 sulfur cluster binding"/>
    <property type="evidence" value="ECO:0007669"/>
    <property type="project" value="UniProtKB-KW"/>
</dbReference>
<dbReference type="GO" id="GO:0005506">
    <property type="term" value="F:iron ion binding"/>
    <property type="evidence" value="ECO:0007669"/>
    <property type="project" value="UniProtKB-UniRule"/>
</dbReference>
<dbReference type="GO" id="GO:0008137">
    <property type="term" value="F:NADH dehydrogenase (ubiquinone) activity"/>
    <property type="evidence" value="ECO:0000318"/>
    <property type="project" value="GO_Central"/>
</dbReference>
<dbReference type="GO" id="GO:0050136">
    <property type="term" value="F:NADH:ubiquinone reductase (non-electrogenic) activity"/>
    <property type="evidence" value="ECO:0007669"/>
    <property type="project" value="UniProtKB-UniRule"/>
</dbReference>
<dbReference type="GO" id="GO:0048038">
    <property type="term" value="F:quinone binding"/>
    <property type="evidence" value="ECO:0007669"/>
    <property type="project" value="UniProtKB-KW"/>
</dbReference>
<dbReference type="GO" id="GO:0009060">
    <property type="term" value="P:aerobic respiration"/>
    <property type="evidence" value="ECO:0000318"/>
    <property type="project" value="GO_Central"/>
</dbReference>
<dbReference type="GO" id="GO:0015990">
    <property type="term" value="P:electron transport coupled proton transport"/>
    <property type="evidence" value="ECO:0000318"/>
    <property type="project" value="GO_Central"/>
</dbReference>
<dbReference type="FunFam" id="3.40.50.12280:FF:000004">
    <property type="entry name" value="NADH-quinone oxidoreductase subunit B"/>
    <property type="match status" value="1"/>
</dbReference>
<dbReference type="Gene3D" id="3.40.50.12280">
    <property type="match status" value="1"/>
</dbReference>
<dbReference type="HAMAP" id="MF_01356">
    <property type="entry name" value="NDH1_NuoB"/>
    <property type="match status" value="1"/>
</dbReference>
<dbReference type="InterPro" id="IPR006137">
    <property type="entry name" value="NADH_UbQ_OxRdtase-like_20kDa"/>
</dbReference>
<dbReference type="InterPro" id="IPR006138">
    <property type="entry name" value="NADH_UQ_OxRdtase_20Kd_su"/>
</dbReference>
<dbReference type="NCBIfam" id="TIGR01957">
    <property type="entry name" value="nuoB_fam"/>
    <property type="match status" value="1"/>
</dbReference>
<dbReference type="NCBIfam" id="NF005012">
    <property type="entry name" value="PRK06411.1"/>
    <property type="match status" value="1"/>
</dbReference>
<dbReference type="PANTHER" id="PTHR11995">
    <property type="entry name" value="NADH DEHYDROGENASE"/>
    <property type="match status" value="1"/>
</dbReference>
<dbReference type="PANTHER" id="PTHR11995:SF14">
    <property type="entry name" value="NADH DEHYDROGENASE [UBIQUINONE] IRON-SULFUR PROTEIN 7, MITOCHONDRIAL"/>
    <property type="match status" value="1"/>
</dbReference>
<dbReference type="Pfam" id="PF01058">
    <property type="entry name" value="Oxidored_q6"/>
    <property type="match status" value="1"/>
</dbReference>
<dbReference type="SUPFAM" id="SSF56770">
    <property type="entry name" value="HydA/Nqo6-like"/>
    <property type="match status" value="1"/>
</dbReference>
<dbReference type="PROSITE" id="PS01150">
    <property type="entry name" value="COMPLEX1_20K"/>
    <property type="match status" value="1"/>
</dbReference>
<comment type="function">
    <text evidence="1">NDH-1 shuttles electrons from NADH, via FMN and iron-sulfur (Fe-S) centers, to quinones in the respiratory chain. The immediate electron acceptor for the enzyme in this species is believed to be a menaquinone. Couples the redox reaction to proton translocation (for every two electrons transferred, four hydrogen ions are translocated across the cytoplasmic membrane), and thus conserves the redox energy in a proton gradient.</text>
</comment>
<comment type="catalytic activity">
    <reaction evidence="1">
        <text>a quinone + NADH + 5 H(+)(in) = a quinol + NAD(+) + 4 H(+)(out)</text>
        <dbReference type="Rhea" id="RHEA:57888"/>
        <dbReference type="ChEBI" id="CHEBI:15378"/>
        <dbReference type="ChEBI" id="CHEBI:24646"/>
        <dbReference type="ChEBI" id="CHEBI:57540"/>
        <dbReference type="ChEBI" id="CHEBI:57945"/>
        <dbReference type="ChEBI" id="CHEBI:132124"/>
    </reaction>
</comment>
<comment type="cofactor">
    <cofactor evidence="1">
        <name>[4Fe-4S] cluster</name>
        <dbReference type="ChEBI" id="CHEBI:49883"/>
    </cofactor>
    <text evidence="1">Binds 1 [4Fe-4S] cluster.</text>
</comment>
<comment type="subunit">
    <text evidence="1">NDH-1 is composed of 14 different subunits. Subunits NuoB, C, D, E, F, and G constitute the peripheral sector of the complex.</text>
</comment>
<comment type="subcellular location">
    <subcellularLocation>
        <location evidence="1">Cell membrane</location>
        <topology evidence="1">Peripheral membrane protein</topology>
        <orientation evidence="1">Cytoplasmic side</orientation>
    </subcellularLocation>
</comment>
<comment type="similarity">
    <text evidence="1">Belongs to the complex I 20 kDa subunit family.</text>
</comment>
<name>NUOB1_STRCO</name>
<reference key="1">
    <citation type="journal article" date="2002" name="Nature">
        <title>Complete genome sequence of the model actinomycete Streptomyces coelicolor A3(2).</title>
        <authorList>
            <person name="Bentley S.D."/>
            <person name="Chater K.F."/>
            <person name="Cerdeno-Tarraga A.-M."/>
            <person name="Challis G.L."/>
            <person name="Thomson N.R."/>
            <person name="James K.D."/>
            <person name="Harris D.E."/>
            <person name="Quail M.A."/>
            <person name="Kieser H."/>
            <person name="Harper D."/>
            <person name="Bateman A."/>
            <person name="Brown S."/>
            <person name="Chandra G."/>
            <person name="Chen C.W."/>
            <person name="Collins M."/>
            <person name="Cronin A."/>
            <person name="Fraser A."/>
            <person name="Goble A."/>
            <person name="Hidalgo J."/>
            <person name="Hornsby T."/>
            <person name="Howarth S."/>
            <person name="Huang C.-H."/>
            <person name="Kieser T."/>
            <person name="Larke L."/>
            <person name="Murphy L.D."/>
            <person name="Oliver K."/>
            <person name="O'Neil S."/>
            <person name="Rabbinowitsch E."/>
            <person name="Rajandream M.A."/>
            <person name="Rutherford K.M."/>
            <person name="Rutter S."/>
            <person name="Seeger K."/>
            <person name="Saunders D."/>
            <person name="Sharp S."/>
            <person name="Squares R."/>
            <person name="Squares S."/>
            <person name="Taylor K."/>
            <person name="Warren T."/>
            <person name="Wietzorrek A."/>
            <person name="Woodward J.R."/>
            <person name="Barrell B.G."/>
            <person name="Parkhill J."/>
            <person name="Hopwood D.A."/>
        </authorList>
    </citation>
    <scope>NUCLEOTIDE SEQUENCE [LARGE SCALE GENOMIC DNA]</scope>
    <source>
        <strain>ATCC BAA-471 / A3(2) / M145</strain>
    </source>
</reference>
<protein>
    <recommendedName>
        <fullName evidence="1">NADH-quinone oxidoreductase subunit B 1</fullName>
        <ecNumber evidence="1">7.1.1.-</ecNumber>
    </recommendedName>
    <alternativeName>
        <fullName evidence="1">NADH dehydrogenase I subunit B 1</fullName>
    </alternativeName>
    <alternativeName>
        <fullName evidence="1">NDH-1 subunit B 1</fullName>
    </alternativeName>
</protein>
<sequence>MGLEEKLPSGFLLTTVEQAAGWVRKSSVFPATFGLACCAIEMMTTGAGRYDLARFGMEVFRGSPRQADLMIVAGRVSQKMAPVLRQVYDQMPNPKWVISMGVCASSGGMFNNYAIVQGVDHVVPVDIYLPGCPPRPEMLMDAILKLHQKIQSSKLGVNAEEAAREAEEAALKALPTIEMKGLLR</sequence>
<evidence type="ECO:0000255" key="1">
    <source>
        <dbReference type="HAMAP-Rule" id="MF_01356"/>
    </source>
</evidence>
<gene>
    <name evidence="1" type="primary">nuoB1</name>
    <name type="ordered locus">SCO4563</name>
    <name type="ORF">SCD16A.20c</name>
</gene>